<organism>
    <name type="scientific">Picrophilus torridus (strain ATCC 700027 / DSM 9790 / JCM 10055 / NBRC 100828 / KAW 2/3)</name>
    <dbReference type="NCBI Taxonomy" id="1122961"/>
    <lineage>
        <taxon>Archaea</taxon>
        <taxon>Methanobacteriati</taxon>
        <taxon>Thermoplasmatota</taxon>
        <taxon>Thermoplasmata</taxon>
        <taxon>Thermoplasmatales</taxon>
        <taxon>Picrophilaceae</taxon>
        <taxon>Picrophilus</taxon>
    </lineage>
</organism>
<accession>Q6L2M8</accession>
<proteinExistence type="inferred from homology"/>
<gene>
    <name evidence="1" type="primary">pelA</name>
    <name type="ordered locus">PTO0189</name>
</gene>
<dbReference type="EC" id="3.1.-.-" evidence="1"/>
<dbReference type="EMBL" id="AE017261">
    <property type="protein sequence ID" value="AAT42774.1"/>
    <property type="molecule type" value="Genomic_DNA"/>
</dbReference>
<dbReference type="RefSeq" id="WP_011176990.1">
    <property type="nucleotide sequence ID" value="NC_005877.1"/>
</dbReference>
<dbReference type="SMR" id="Q6L2M8"/>
<dbReference type="FunCoup" id="Q6L2M8">
    <property type="interactions" value="109"/>
</dbReference>
<dbReference type="STRING" id="263820.PTO0189"/>
<dbReference type="PaxDb" id="263820-PTO0189"/>
<dbReference type="GeneID" id="2844490"/>
<dbReference type="KEGG" id="pto:PTO0189"/>
<dbReference type="eggNOG" id="arCOG01741">
    <property type="taxonomic scope" value="Archaea"/>
</dbReference>
<dbReference type="HOGENOM" id="CLU_023334_0_0_2"/>
<dbReference type="InParanoid" id="Q6L2M8"/>
<dbReference type="OrthoDB" id="31300at2157"/>
<dbReference type="Proteomes" id="UP000000438">
    <property type="component" value="Chromosome"/>
</dbReference>
<dbReference type="GO" id="GO:0005737">
    <property type="term" value="C:cytoplasm"/>
    <property type="evidence" value="ECO:0007669"/>
    <property type="project" value="UniProtKB-SubCell"/>
</dbReference>
<dbReference type="GO" id="GO:0004519">
    <property type="term" value="F:endonuclease activity"/>
    <property type="evidence" value="ECO:0007669"/>
    <property type="project" value="UniProtKB-UniRule"/>
</dbReference>
<dbReference type="GO" id="GO:0046872">
    <property type="term" value="F:metal ion binding"/>
    <property type="evidence" value="ECO:0007669"/>
    <property type="project" value="UniProtKB-UniRule"/>
</dbReference>
<dbReference type="GO" id="GO:0070651">
    <property type="term" value="P:nonfunctional rRNA decay"/>
    <property type="evidence" value="ECO:0007669"/>
    <property type="project" value="TreeGrafter"/>
</dbReference>
<dbReference type="GO" id="GO:0070966">
    <property type="term" value="P:nuclear-transcribed mRNA catabolic process, no-go decay"/>
    <property type="evidence" value="ECO:0007669"/>
    <property type="project" value="InterPro"/>
</dbReference>
<dbReference type="GO" id="GO:0070481">
    <property type="term" value="P:nuclear-transcribed mRNA catabolic process, non-stop decay"/>
    <property type="evidence" value="ECO:0007669"/>
    <property type="project" value="InterPro"/>
</dbReference>
<dbReference type="GO" id="GO:0032790">
    <property type="term" value="P:ribosome disassembly"/>
    <property type="evidence" value="ECO:0007669"/>
    <property type="project" value="TreeGrafter"/>
</dbReference>
<dbReference type="GO" id="GO:0071025">
    <property type="term" value="P:RNA surveillance"/>
    <property type="evidence" value="ECO:0007669"/>
    <property type="project" value="InterPro"/>
</dbReference>
<dbReference type="Gene3D" id="3.30.1330.30">
    <property type="match status" value="1"/>
</dbReference>
<dbReference type="Gene3D" id="3.30.420.60">
    <property type="entry name" value="eRF1 domain 2"/>
    <property type="match status" value="1"/>
</dbReference>
<dbReference type="Gene3D" id="2.30.30.870">
    <property type="entry name" value="Pelota, domain A"/>
    <property type="match status" value="1"/>
</dbReference>
<dbReference type="HAMAP" id="MF_01853">
    <property type="entry name" value="PelO"/>
    <property type="match status" value="1"/>
</dbReference>
<dbReference type="InterPro" id="IPR042226">
    <property type="entry name" value="eFR1_2_sf"/>
</dbReference>
<dbReference type="InterPro" id="IPR005140">
    <property type="entry name" value="eRF1_1_Pelota"/>
</dbReference>
<dbReference type="InterPro" id="IPR005142">
    <property type="entry name" value="eRF1_3"/>
</dbReference>
<dbReference type="InterPro" id="IPR038069">
    <property type="entry name" value="Pelota/DOM34_N"/>
</dbReference>
<dbReference type="InterPro" id="IPR023521">
    <property type="entry name" value="Pelota_arc"/>
</dbReference>
<dbReference type="InterPro" id="IPR029064">
    <property type="entry name" value="Ribosomal_eL30-like_sf"/>
</dbReference>
<dbReference type="InterPro" id="IPR004405">
    <property type="entry name" value="Transl-rel_pelota"/>
</dbReference>
<dbReference type="PANTHER" id="PTHR10853">
    <property type="entry name" value="PELOTA"/>
    <property type="match status" value="1"/>
</dbReference>
<dbReference type="PANTHER" id="PTHR10853:SF0">
    <property type="entry name" value="PROTEIN PELOTA HOMOLOG"/>
    <property type="match status" value="1"/>
</dbReference>
<dbReference type="Pfam" id="PF03463">
    <property type="entry name" value="eRF1_1"/>
    <property type="match status" value="1"/>
</dbReference>
<dbReference type="Pfam" id="PF03465">
    <property type="entry name" value="eRF1_3"/>
    <property type="match status" value="1"/>
</dbReference>
<dbReference type="SMART" id="SM01194">
    <property type="entry name" value="eRF1_1"/>
    <property type="match status" value="1"/>
</dbReference>
<dbReference type="SUPFAM" id="SSF159065">
    <property type="entry name" value="Dom34/Pelota N-terminal domain-like"/>
    <property type="match status" value="1"/>
</dbReference>
<dbReference type="SUPFAM" id="SSF55315">
    <property type="entry name" value="L30e-like"/>
    <property type="match status" value="1"/>
</dbReference>
<dbReference type="SUPFAM" id="SSF53137">
    <property type="entry name" value="Translational machinery components"/>
    <property type="match status" value="1"/>
</dbReference>
<protein>
    <recommendedName>
        <fullName evidence="1">Protein pelota homolog</fullName>
        <ecNumber evidence="1">3.1.-.-</ecNumber>
    </recommendedName>
</protein>
<reference key="1">
    <citation type="journal article" date="2004" name="Proc. Natl. Acad. Sci. U.S.A.">
        <title>Genome sequence of Picrophilus torridus and its implications for life around pH 0.</title>
        <authorList>
            <person name="Fuetterer O."/>
            <person name="Angelov A."/>
            <person name="Liesegang H."/>
            <person name="Gottschalk G."/>
            <person name="Schleper C."/>
            <person name="Schepers B."/>
            <person name="Dock C."/>
            <person name="Antranikian G."/>
            <person name="Liebl W."/>
        </authorList>
    </citation>
    <scope>NUCLEOTIDE SEQUENCE [LARGE SCALE GENOMIC DNA]</scope>
    <source>
        <strain>ATCC 700027 / DSM 9790 / JCM 10055 / NBRC 100828 / KAW 2/3</strain>
    </source>
</reference>
<comment type="function">
    <text evidence="1">May function in recognizing stalled ribosomes, interact with stem-loop structures in stalled mRNA molecules, and effect endonucleolytic cleavage of the mRNA. May play a role in the release non-functional ribosomes and degradation of damaged mRNAs. Has endoribonuclease activity.</text>
</comment>
<comment type="cofactor">
    <cofactor evidence="1">
        <name>a divalent metal cation</name>
        <dbReference type="ChEBI" id="CHEBI:60240"/>
    </cofactor>
</comment>
<comment type="subunit">
    <text evidence="1">Monomer.</text>
</comment>
<comment type="subcellular location">
    <subcellularLocation>
        <location evidence="1">Cytoplasm</location>
    </subcellularLocation>
</comment>
<comment type="domain">
    <text evidence="1">The N-terminal domain has the RNA-binding Sm fold. It harbors the endoribonuclease activity.</text>
</comment>
<comment type="similarity">
    <text evidence="1">Belongs to the eukaryotic release factor 1 family. Pelota subfamily.</text>
</comment>
<evidence type="ECO:0000255" key="1">
    <source>
        <dbReference type="HAMAP-Rule" id="MF_01853"/>
    </source>
</evidence>
<feature type="chain" id="PRO_0000361812" description="Protein pelota homolog">
    <location>
        <begin position="1"/>
        <end position="339"/>
    </location>
</feature>
<keyword id="KW-0963">Cytoplasm</keyword>
<keyword id="KW-0255">Endonuclease</keyword>
<keyword id="KW-0378">Hydrolase</keyword>
<keyword id="KW-0479">Metal-binding</keyword>
<keyword id="KW-0540">Nuclease</keyword>
<sequence>MKINIDEKLETTEILIETQDDLWYIKNILNPGDIIEGIAYRRLEKRNDLERSKSTERIPIKVKIKIENLDFQPFTDKIKILGIIIDGDFSGEHQSIMYGPGDTLKIYKNLNEAERDFLNEAVKNEYSSGMIFVSLDEEAADIYLMRSYSLQDMAHIESNKTGKRYDLKYNEKQYFLDIIKALKNIKNVFLLIVLGTGFEPEKLYNEIKKDPFFNNIDVKFYNTYDTGKSGVYNLLNSDATSNIIKESRMAKEKRILETFLRNLNSGLSVYGYDEINNYLDNGAIDTLIISEEKFKMPETRELLNKASGIKIYIISNYTEPGEIIRSFGGYCAILRYKIK</sequence>
<name>PELO_PICTO</name>